<proteinExistence type="inferred from homology"/>
<keyword id="KW-1003">Cell membrane</keyword>
<keyword id="KW-0472">Membrane</keyword>
<keyword id="KW-1185">Reference proteome</keyword>
<keyword id="KW-0762">Sugar transport</keyword>
<keyword id="KW-0812">Transmembrane</keyword>
<keyword id="KW-1133">Transmembrane helix</keyword>
<keyword id="KW-0813">Transport</keyword>
<protein>
    <recommendedName>
        <fullName>Maltodextrin transport system permease protein MalD</fullName>
    </recommendedName>
</protein>
<comment type="function">
    <text evidence="1">Part of the binding-protein-dependent transport system for maltodextrin; probably responsible for the translocation of the substrate across the membrane.</text>
</comment>
<comment type="subcellular location">
    <subcellularLocation>
        <location evidence="1">Cell membrane</location>
        <topology evidence="2">Multi-pass membrane protein</topology>
    </subcellularLocation>
</comment>
<comment type="similarity">
    <text evidence="3">Belongs to the binding-protein-dependent transport system permease family. MalFG subfamily.</text>
</comment>
<comment type="sequence caution" evidence="3">
    <conflict type="erroneous initiation">
        <sequence resource="EMBL-CDS" id="AAL00722"/>
    </conflict>
</comment>
<organism>
    <name type="scientific">Streptococcus pneumoniae (strain ATCC BAA-255 / R6)</name>
    <dbReference type="NCBI Taxonomy" id="171101"/>
    <lineage>
        <taxon>Bacteria</taxon>
        <taxon>Bacillati</taxon>
        <taxon>Bacillota</taxon>
        <taxon>Bacilli</taxon>
        <taxon>Lactobacillales</taxon>
        <taxon>Streptococcaceae</taxon>
        <taxon>Streptococcus</taxon>
    </lineage>
</organism>
<accession>P0A4N4</accession>
<accession>Q04699</accession>
<reference key="1">
    <citation type="journal article" date="2001" name="J. Bacteriol.">
        <title>Genome of the bacterium Streptococcus pneumoniae strain R6.</title>
        <authorList>
            <person name="Hoskins J."/>
            <person name="Alborn W.E. Jr."/>
            <person name="Arnold J."/>
            <person name="Blaszczak L.C."/>
            <person name="Burgett S."/>
            <person name="DeHoff B.S."/>
            <person name="Estrem S.T."/>
            <person name="Fritz L."/>
            <person name="Fu D.-J."/>
            <person name="Fuller W."/>
            <person name="Geringer C."/>
            <person name="Gilmour R."/>
            <person name="Glass J.S."/>
            <person name="Khoja H."/>
            <person name="Kraft A.R."/>
            <person name="Lagace R.E."/>
            <person name="LeBlanc D.J."/>
            <person name="Lee L.N."/>
            <person name="Lefkowitz E.J."/>
            <person name="Lu J."/>
            <person name="Matsushima P."/>
            <person name="McAhren S.M."/>
            <person name="McHenney M."/>
            <person name="McLeaster K."/>
            <person name="Mundy C.W."/>
            <person name="Nicas T.I."/>
            <person name="Norris F.H."/>
            <person name="O'Gara M."/>
            <person name="Peery R.B."/>
            <person name="Robertson G.T."/>
            <person name="Rockey P."/>
            <person name="Sun P.-M."/>
            <person name="Winkler M.E."/>
            <person name="Yang Y."/>
            <person name="Young-Bellido M."/>
            <person name="Zhao G."/>
            <person name="Zook C.A."/>
            <person name="Baltz R.H."/>
            <person name="Jaskunas S.R."/>
            <person name="Rosteck P.R. Jr."/>
            <person name="Skatrud P.L."/>
            <person name="Glass J.I."/>
        </authorList>
    </citation>
    <scope>NUCLEOTIDE SEQUENCE [LARGE SCALE GENOMIC DNA]</scope>
    <source>
        <strain>ATCC BAA-255 / R6</strain>
    </source>
</reference>
<evidence type="ECO:0000250" key="1"/>
<evidence type="ECO:0000255" key="2">
    <source>
        <dbReference type="PROSITE-ProRule" id="PRU00441"/>
    </source>
</evidence>
<evidence type="ECO:0000305" key="3"/>
<gene>
    <name type="primary">malD</name>
    <name type="ordered locus">spr1920</name>
</gene>
<sequence>MNNSIKLKRRLTQSLTYLYLIGLSIVIIYPLLITIMSAFKAGNVSAFKLDTNIDLNFDNFKGLFTETLYGTWYLNTLIIALITMAVQTSIIVLAGYAYSRYNFLARKQSLVFFLIIQMVPTMAALTAFFVMALMLNALNHNWFLIFLYVGGGIPMNAWLMKGYFDTVPMSLDESAKLDGAGHFRRFWQIVLPLVRPMVAVQALWAFMGPFGDYILSSFLLREKEYFTVAVGLQTFVNNAKNLKIAYFSAGAILIALPICILFFFLQKNFVSGLTSGGDKG</sequence>
<dbReference type="EMBL" id="AE007317">
    <property type="protein sequence ID" value="AAL00722.1"/>
    <property type="status" value="ALT_INIT"/>
    <property type="molecule type" value="Genomic_DNA"/>
</dbReference>
<dbReference type="PIR" id="E98111">
    <property type="entry name" value="E98111"/>
</dbReference>
<dbReference type="RefSeq" id="NP_359511.1">
    <property type="nucleotide sequence ID" value="NC_003098.1"/>
</dbReference>
<dbReference type="RefSeq" id="WP_001065636.1">
    <property type="nucleotide sequence ID" value="NC_003098.1"/>
</dbReference>
<dbReference type="SMR" id="P0A4N4"/>
<dbReference type="STRING" id="171101.spr1920"/>
<dbReference type="KEGG" id="spr:spr1920"/>
<dbReference type="PATRIC" id="fig|171101.6.peg.2069"/>
<dbReference type="eggNOG" id="COG3833">
    <property type="taxonomic scope" value="Bacteria"/>
</dbReference>
<dbReference type="HOGENOM" id="CLU_016047_1_2_9"/>
<dbReference type="Proteomes" id="UP000000586">
    <property type="component" value="Chromosome"/>
</dbReference>
<dbReference type="GO" id="GO:0005886">
    <property type="term" value="C:plasma membrane"/>
    <property type="evidence" value="ECO:0007669"/>
    <property type="project" value="UniProtKB-SubCell"/>
</dbReference>
<dbReference type="GO" id="GO:0015423">
    <property type="term" value="F:ABC-type maltose transporter activity"/>
    <property type="evidence" value="ECO:0000318"/>
    <property type="project" value="GO_Central"/>
</dbReference>
<dbReference type="GO" id="GO:0042956">
    <property type="term" value="P:maltodextrin transmembrane transport"/>
    <property type="evidence" value="ECO:0000318"/>
    <property type="project" value="GO_Central"/>
</dbReference>
<dbReference type="GO" id="GO:0015768">
    <property type="term" value="P:maltose transport"/>
    <property type="evidence" value="ECO:0000318"/>
    <property type="project" value="GO_Central"/>
</dbReference>
<dbReference type="CDD" id="cd06261">
    <property type="entry name" value="TM_PBP2"/>
    <property type="match status" value="1"/>
</dbReference>
<dbReference type="FunFam" id="1.10.3720.10:FF:000034">
    <property type="entry name" value="Sugar ABC transporter permease"/>
    <property type="match status" value="1"/>
</dbReference>
<dbReference type="Gene3D" id="1.10.3720.10">
    <property type="entry name" value="MetI-like"/>
    <property type="match status" value="1"/>
</dbReference>
<dbReference type="InterPro" id="IPR050901">
    <property type="entry name" value="BP-dep_ABC_trans_perm"/>
</dbReference>
<dbReference type="InterPro" id="IPR000515">
    <property type="entry name" value="MetI-like"/>
</dbReference>
<dbReference type="InterPro" id="IPR035906">
    <property type="entry name" value="MetI-like_sf"/>
</dbReference>
<dbReference type="PANTHER" id="PTHR32243">
    <property type="entry name" value="MALTOSE TRANSPORT SYSTEM PERMEASE-RELATED"/>
    <property type="match status" value="1"/>
</dbReference>
<dbReference type="PANTHER" id="PTHR32243:SF50">
    <property type="entry name" value="MALTOSE_MALTODEXTRIN TRANSPORT SYSTEM PERMEASE PROTEIN MALG"/>
    <property type="match status" value="1"/>
</dbReference>
<dbReference type="Pfam" id="PF00528">
    <property type="entry name" value="BPD_transp_1"/>
    <property type="match status" value="1"/>
</dbReference>
<dbReference type="SUPFAM" id="SSF161098">
    <property type="entry name" value="MetI-like"/>
    <property type="match status" value="1"/>
</dbReference>
<dbReference type="PROSITE" id="PS50928">
    <property type="entry name" value="ABC_TM1"/>
    <property type="match status" value="1"/>
</dbReference>
<feature type="chain" id="PRO_0000060097" description="Maltodextrin transport system permease protein MalD">
    <location>
        <begin position="1"/>
        <end position="280"/>
    </location>
</feature>
<feature type="transmembrane region" description="Helical" evidence="2">
    <location>
        <begin position="15"/>
        <end position="35"/>
    </location>
</feature>
<feature type="transmembrane region" description="Helical" evidence="2">
    <location>
        <begin position="77"/>
        <end position="97"/>
    </location>
</feature>
<feature type="transmembrane region" description="Helical" evidence="2">
    <location>
        <begin position="110"/>
        <end position="130"/>
    </location>
</feature>
<feature type="transmembrane region" description="Helical" evidence="2">
    <location>
        <begin position="142"/>
        <end position="162"/>
    </location>
</feature>
<feature type="transmembrane region" description="Helical" evidence="2">
    <location>
        <begin position="200"/>
        <end position="220"/>
    </location>
</feature>
<feature type="transmembrane region" description="Helical" evidence="2">
    <location>
        <begin position="244"/>
        <end position="264"/>
    </location>
</feature>
<feature type="domain" description="ABC transmembrane type-1" evidence="2">
    <location>
        <begin position="73"/>
        <end position="265"/>
    </location>
</feature>
<name>MALD_STRR6</name>